<name>PMIP_PLEDJ</name>
<reference key="1">
    <citation type="journal article" date="2004" name="Fungal Genet. Biol.">
        <title>Evolution of the gene encoding mitochondrial intermediate peptidase and its cosegregation with the A mating-type locus of mushroom fungi.</title>
        <authorList>
            <person name="James T.Y."/>
            <person name="Kuees U."/>
            <person name="Rehner S.A."/>
            <person name="Vilgalys R."/>
        </authorList>
    </citation>
    <scope>NUCLEOTIDE SEQUENCE [GENOMIC DNA]</scope>
    <source>
        <strain>RV95/957.30</strain>
    </source>
</reference>
<reference key="2">
    <citation type="journal article" date="2004" name="Fungal Genet. Biol.">
        <title>The genetic structure and diversity of the A and B mating-type genes from the tropical oyster mushroom, Pleurotus djamor.</title>
        <authorList>
            <person name="James T.Y."/>
            <person name="Liou S.-R."/>
            <person name="Vilgalys R."/>
        </authorList>
    </citation>
    <scope>NUCLEOTIDE SEQUENCE [GENOMIC DNA]</scope>
    <source>
        <strain>RV95/957.30</strain>
    </source>
</reference>
<keyword id="KW-0378">Hydrolase</keyword>
<keyword id="KW-0479">Metal-binding</keyword>
<keyword id="KW-0482">Metalloprotease</keyword>
<keyword id="KW-0496">Mitochondrion</keyword>
<keyword id="KW-0645">Protease</keyword>
<keyword id="KW-0809">Transit peptide</keyword>
<keyword id="KW-0862">Zinc</keyword>
<evidence type="ECO:0000250" key="1"/>
<evidence type="ECO:0000255" key="2"/>
<evidence type="ECO:0000255" key="3">
    <source>
        <dbReference type="PROSITE-ProRule" id="PRU10095"/>
    </source>
</evidence>
<evidence type="ECO:0000305" key="4"/>
<accession>Q6Y5M5</accession>
<protein>
    <recommendedName>
        <fullName>Mitochondrial intermediate peptidase</fullName>
        <shortName>MIP</shortName>
        <ecNumber>3.4.24.59</ecNumber>
    </recommendedName>
    <alternativeName>
        <fullName>Octapeptidyl aminopeptidase</fullName>
    </alternativeName>
</protein>
<proteinExistence type="inferred from homology"/>
<dbReference type="EC" id="3.4.24.59"/>
<dbReference type="EMBL" id="AY179563">
    <property type="protein sequence ID" value="AAO61502.1"/>
    <property type="molecule type" value="Genomic_DNA"/>
</dbReference>
<dbReference type="EMBL" id="AY462111">
    <property type="protein sequence ID" value="AAS46738.1"/>
    <property type="molecule type" value="Genomic_DNA"/>
</dbReference>
<dbReference type="SMR" id="Q6Y5M5"/>
<dbReference type="GO" id="GO:0005759">
    <property type="term" value="C:mitochondrial matrix"/>
    <property type="evidence" value="ECO:0007669"/>
    <property type="project" value="UniProtKB-SubCell"/>
</dbReference>
<dbReference type="GO" id="GO:0046872">
    <property type="term" value="F:metal ion binding"/>
    <property type="evidence" value="ECO:0007669"/>
    <property type="project" value="UniProtKB-KW"/>
</dbReference>
<dbReference type="GO" id="GO:0004222">
    <property type="term" value="F:metalloendopeptidase activity"/>
    <property type="evidence" value="ECO:0007669"/>
    <property type="project" value="UniProtKB-EC"/>
</dbReference>
<dbReference type="GO" id="GO:0006518">
    <property type="term" value="P:peptide metabolic process"/>
    <property type="evidence" value="ECO:0007669"/>
    <property type="project" value="TreeGrafter"/>
</dbReference>
<dbReference type="GO" id="GO:0006627">
    <property type="term" value="P:protein processing involved in protein targeting to mitochondrion"/>
    <property type="evidence" value="ECO:0007669"/>
    <property type="project" value="TreeGrafter"/>
</dbReference>
<dbReference type="CDD" id="cd06457">
    <property type="entry name" value="M3A_MIP"/>
    <property type="match status" value="1"/>
</dbReference>
<dbReference type="FunFam" id="3.40.390.10:FF:000055">
    <property type="entry name" value="Related to mitochondrial intermediate peptidase"/>
    <property type="match status" value="1"/>
</dbReference>
<dbReference type="Gene3D" id="1.10.1370.40">
    <property type="match status" value="2"/>
</dbReference>
<dbReference type="Gene3D" id="1.10.1370.10">
    <property type="entry name" value="Neurolysin, domain 3"/>
    <property type="match status" value="1"/>
</dbReference>
<dbReference type="InterPro" id="IPR033851">
    <property type="entry name" value="M3A_MIP"/>
</dbReference>
<dbReference type="InterPro" id="IPR024077">
    <property type="entry name" value="Neurolysin/TOP_dom2"/>
</dbReference>
<dbReference type="InterPro" id="IPR045090">
    <property type="entry name" value="Pept_M3A_M3B"/>
</dbReference>
<dbReference type="InterPro" id="IPR001567">
    <property type="entry name" value="Pept_M3A_M3B_dom"/>
</dbReference>
<dbReference type="PANTHER" id="PTHR11804:SF79">
    <property type="entry name" value="MITOCHONDRIAL INTERMEDIATE PEPTIDASE"/>
    <property type="match status" value="1"/>
</dbReference>
<dbReference type="PANTHER" id="PTHR11804">
    <property type="entry name" value="PROTEASE M3 THIMET OLIGOPEPTIDASE-RELATED"/>
    <property type="match status" value="1"/>
</dbReference>
<dbReference type="Pfam" id="PF01432">
    <property type="entry name" value="Peptidase_M3"/>
    <property type="match status" value="1"/>
</dbReference>
<dbReference type="SUPFAM" id="SSF55486">
    <property type="entry name" value="Metalloproteases ('zincins'), catalytic domain"/>
    <property type="match status" value="1"/>
</dbReference>
<dbReference type="PROSITE" id="PS00142">
    <property type="entry name" value="ZINC_PROTEASE"/>
    <property type="match status" value="1"/>
</dbReference>
<comment type="function">
    <text evidence="1">Cleaves proteins, imported into the mitochondrion, to their mature size. While most mitochondrial precursor proteins are processed to the mature form in one step by mitochondrial processing peptidase (MPP), the sequential cleavage by MIP of an octapeptide after initial processing by MPP is a required step for a subgroup of nuclear-encoded precursor proteins destined for the matrix or the inner membrane (By similarity).</text>
</comment>
<comment type="catalytic activity">
    <reaction>
        <text>Release of an N-terminal octapeptide as second stage of processing of some proteins imported into the mitochondrion.</text>
        <dbReference type="EC" id="3.4.24.59"/>
    </reaction>
</comment>
<comment type="cofactor">
    <cofactor evidence="1">
        <name>Zn(2+)</name>
        <dbReference type="ChEBI" id="CHEBI:29105"/>
    </cofactor>
    <text evidence="1">Binds 1 zinc ion.</text>
</comment>
<comment type="subcellular location">
    <subcellularLocation>
        <location evidence="1">Mitochondrion matrix</location>
    </subcellularLocation>
</comment>
<comment type="similarity">
    <text evidence="4">Belongs to the peptidase M3 family.</text>
</comment>
<feature type="transit peptide" description="Mitochondrion" evidence="2">
    <location>
        <begin position="1"/>
        <end position="43"/>
    </location>
</feature>
<feature type="chain" id="PRO_0000343203" description="Mitochondrial intermediate peptidase">
    <location>
        <begin position="44"/>
        <end position="785"/>
    </location>
</feature>
<feature type="active site" evidence="3">
    <location>
        <position position="568"/>
    </location>
</feature>
<feature type="binding site" evidence="3">
    <location>
        <position position="567"/>
    </location>
    <ligand>
        <name>Zn(2+)</name>
        <dbReference type="ChEBI" id="CHEBI:29105"/>
        <note>catalytic</note>
    </ligand>
</feature>
<feature type="binding site" evidence="3">
    <location>
        <position position="571"/>
    </location>
    <ligand>
        <name>Zn(2+)</name>
        <dbReference type="ChEBI" id="CHEBI:29105"/>
        <note>catalytic</note>
    </ligand>
</feature>
<feature type="binding site" evidence="3">
    <location>
        <position position="574"/>
    </location>
    <ligand>
        <name>Zn(2+)</name>
        <dbReference type="ChEBI" id="CHEBI:29105"/>
        <note>catalytic</note>
    </ligand>
</feature>
<gene>
    <name type="primary">OCT1</name>
    <name type="synonym">MIP</name>
</gene>
<organism>
    <name type="scientific">Pleurotus djamor</name>
    <name type="common">Pink oyster mushroom</name>
    <dbReference type="NCBI Taxonomy" id="34470"/>
    <lineage>
        <taxon>Eukaryota</taxon>
        <taxon>Fungi</taxon>
        <taxon>Dikarya</taxon>
        <taxon>Basidiomycota</taxon>
        <taxon>Agaricomycotina</taxon>
        <taxon>Agaricomycetes</taxon>
        <taxon>Agaricomycetidae</taxon>
        <taxon>Agaricales</taxon>
        <taxon>Pleurotineae</taxon>
        <taxon>Pleurotaceae</taxon>
        <taxon>Pleurotus</taxon>
    </lineage>
</organism>
<sequence>MLTRPAQNALLKSMQPLFRFRGCLLAKSTSTPRRDISTSSRKLAHPTTVPIPPSVDDHALVALLDQPSSFGIVSRLFQTQGGLFGHKELQQPSGFITLAEATLVRAQILTNRILRARESQDELRKVVKNLDRLSDMLCGVIDLAELVRNAHPDRAWVEAANQAYETLCEFMNVLNTDVGLYDVLKAVLSDPTIVQGMGPEEYSTAQIFWHDFEKSAINLPPEQRQRFVSLSSEILVLGREFLQEANTARPPASIHASELAGLKDKGMGARLQLQAQFTQKDLLVYPGSLQAQMIMRCAPAEEPRRKLYIAANSSTPSQIELLERLLRTRAELARLVGKESFAHMTLSDKMAKSPENVQYFLDALMDYTRPYARKALRTLSMRKQAHLQTPPFPTIQPWDRDFYCPPEPPAPPIPLPPLTLGTVFAGLSRLFYHLYGISLRPAECAPGEVWHPHVHKLEVVDEDAGVIGWIYADLFARRGKPSGAAHYTVRCSRRTDDDDEAEDGSIPAAEPYVRVSQSFESSKRHRVRGQDGEFQLPLVVLVCEFARPSVSSGPTVLDWHEVMTLFHEMGHAMHSMIGRTEYQNVSGTRCATDFVELPSILMEHFLSSPTVLSLFDVSSSTPSSAWQVGNHHQDPCHSIDTHSQILLAAMDQIYHSPSVVDPSFSSTSALEALHKSRGLIPYVPGTSFQTQFGHLFGYGATYYSYLFDRAIASRVWSQVFHANPLNRELGDKYKREVLKFGGGRDPWKMISHLLDSPWLENGNADAMKEVGQWRIEDEVGQPGRH</sequence>